<comment type="function">
    <text evidence="1">Displays ATPase and GTPase activities.</text>
</comment>
<comment type="similarity">
    <text evidence="1">Belongs to the RapZ-like family.</text>
</comment>
<dbReference type="EMBL" id="CP000936">
    <property type="protein sequence ID" value="ACA36459.1"/>
    <property type="molecule type" value="Genomic_DNA"/>
</dbReference>
<dbReference type="SMR" id="B1ICY6"/>
<dbReference type="KEGG" id="spv:SPH_1680"/>
<dbReference type="HOGENOM" id="CLU_059558_0_0_9"/>
<dbReference type="Proteomes" id="UP000002163">
    <property type="component" value="Chromosome"/>
</dbReference>
<dbReference type="GO" id="GO:0005524">
    <property type="term" value="F:ATP binding"/>
    <property type="evidence" value="ECO:0007669"/>
    <property type="project" value="UniProtKB-UniRule"/>
</dbReference>
<dbReference type="GO" id="GO:0005525">
    <property type="term" value="F:GTP binding"/>
    <property type="evidence" value="ECO:0007669"/>
    <property type="project" value="UniProtKB-UniRule"/>
</dbReference>
<dbReference type="Gene3D" id="3.40.50.300">
    <property type="entry name" value="P-loop containing nucleotide triphosphate hydrolases"/>
    <property type="match status" value="1"/>
</dbReference>
<dbReference type="HAMAP" id="MF_00636">
    <property type="entry name" value="RapZ_like"/>
    <property type="match status" value="1"/>
</dbReference>
<dbReference type="InterPro" id="IPR027417">
    <property type="entry name" value="P-loop_NTPase"/>
</dbReference>
<dbReference type="InterPro" id="IPR005337">
    <property type="entry name" value="RapZ-like"/>
</dbReference>
<dbReference type="InterPro" id="IPR053930">
    <property type="entry name" value="RapZ-like_N"/>
</dbReference>
<dbReference type="InterPro" id="IPR053931">
    <property type="entry name" value="RapZ_C"/>
</dbReference>
<dbReference type="NCBIfam" id="NF003828">
    <property type="entry name" value="PRK05416.1"/>
    <property type="match status" value="1"/>
</dbReference>
<dbReference type="PANTHER" id="PTHR30448">
    <property type="entry name" value="RNASE ADAPTER PROTEIN RAPZ"/>
    <property type="match status" value="1"/>
</dbReference>
<dbReference type="PANTHER" id="PTHR30448:SF0">
    <property type="entry name" value="RNASE ADAPTER PROTEIN RAPZ"/>
    <property type="match status" value="1"/>
</dbReference>
<dbReference type="Pfam" id="PF22740">
    <property type="entry name" value="PapZ_C"/>
    <property type="match status" value="1"/>
</dbReference>
<dbReference type="Pfam" id="PF03668">
    <property type="entry name" value="RapZ-like_N"/>
    <property type="match status" value="1"/>
</dbReference>
<dbReference type="PIRSF" id="PIRSF005052">
    <property type="entry name" value="P-loopkin"/>
    <property type="match status" value="1"/>
</dbReference>
<dbReference type="SUPFAM" id="SSF52540">
    <property type="entry name" value="P-loop containing nucleoside triphosphate hydrolases"/>
    <property type="match status" value="1"/>
</dbReference>
<proteinExistence type="inferred from homology"/>
<keyword id="KW-0067">ATP-binding</keyword>
<keyword id="KW-0342">GTP-binding</keyword>
<keyword id="KW-0547">Nucleotide-binding</keyword>
<feature type="chain" id="PRO_1000130788" description="Nucleotide-binding protein SPH_1680">
    <location>
        <begin position="1"/>
        <end position="296"/>
    </location>
</feature>
<feature type="binding site" evidence="1">
    <location>
        <begin position="13"/>
        <end position="20"/>
    </location>
    <ligand>
        <name>ATP</name>
        <dbReference type="ChEBI" id="CHEBI:30616"/>
    </ligand>
</feature>
<feature type="binding site" evidence="1">
    <location>
        <begin position="63"/>
        <end position="66"/>
    </location>
    <ligand>
        <name>GTP</name>
        <dbReference type="ChEBI" id="CHEBI:37565"/>
    </ligand>
</feature>
<reference key="1">
    <citation type="journal article" date="2010" name="Genome Biol.">
        <title>Structure and dynamics of the pan-genome of Streptococcus pneumoniae and closely related species.</title>
        <authorList>
            <person name="Donati C."/>
            <person name="Hiller N.L."/>
            <person name="Tettelin H."/>
            <person name="Muzzi A."/>
            <person name="Croucher N.J."/>
            <person name="Angiuoli S.V."/>
            <person name="Oggioni M."/>
            <person name="Dunning Hotopp J.C."/>
            <person name="Hu F.Z."/>
            <person name="Riley D.R."/>
            <person name="Covacci A."/>
            <person name="Mitchell T.J."/>
            <person name="Bentley S.D."/>
            <person name="Kilian M."/>
            <person name="Ehrlich G.D."/>
            <person name="Rappuoli R."/>
            <person name="Moxon E.R."/>
            <person name="Masignani V."/>
        </authorList>
    </citation>
    <scope>NUCLEOTIDE SEQUENCE [LARGE SCALE GENOMIC DNA]</scope>
    <source>
        <strain>Hungary19A-6</strain>
    </source>
</reference>
<organism>
    <name type="scientific">Streptococcus pneumoniae (strain Hungary19A-6)</name>
    <dbReference type="NCBI Taxonomy" id="487214"/>
    <lineage>
        <taxon>Bacteria</taxon>
        <taxon>Bacillati</taxon>
        <taxon>Bacillota</taxon>
        <taxon>Bacilli</taxon>
        <taxon>Lactobacillales</taxon>
        <taxon>Streptococcaceae</taxon>
        <taxon>Streptococcus</taxon>
    </lineage>
</organism>
<evidence type="ECO:0000255" key="1">
    <source>
        <dbReference type="HAMAP-Rule" id="MF_00636"/>
    </source>
</evidence>
<accession>B1ICY6</accession>
<sequence>MTKKQLHLVIVTGMSGAGKTVAIQSFEDLGYFTIDNMPPALLPKFLQLVEIKEDNPKLALVVDMRSRSFFSEIQAVLDELENQDGLDFKILFLDAADKELVARYKETRRSHPLAADGRILDGIKLERELLAPLKNMSQNVVDTTELTPRELRKTLAEQFSDQEQAQSFRIEVMSFGFKYGIPIDADLVFDVRFLPNPYYLPELRNQTGVDEPVYDYVMNHPESEDFYQHLLALIEPILPSYQKEGKSVLTIAMGCTGGQHRSVAFAKRLVQDLSKNWSVNEGHRDKDRRKETVNRS</sequence>
<protein>
    <recommendedName>
        <fullName evidence="1">Nucleotide-binding protein SPH_1680</fullName>
    </recommendedName>
</protein>
<name>Y1680_STRPI</name>
<gene>
    <name type="ordered locus">SPH_1680</name>
</gene>